<protein>
    <recommendedName>
        <fullName evidence="1">Capsid vertex component 2</fullName>
    </recommendedName>
</protein>
<keyword id="KW-0167">Capsid protein</keyword>
<keyword id="KW-1048">Host nucleus</keyword>
<keyword id="KW-0945">Host-virus interaction</keyword>
<keyword id="KW-1185">Reference proteome</keyword>
<keyword id="KW-0231">Viral genome packaging</keyword>
<keyword id="KW-1163">Viral penetration into host nucleus</keyword>
<keyword id="KW-1188">Viral release from host cell</keyword>
<keyword id="KW-0946">Virion</keyword>
<keyword id="KW-1160">Virus entry into host cell</keyword>
<gene>
    <name evidence="1" type="primary">CVC2</name>
    <name type="ordered locus">UL77</name>
</gene>
<dbReference type="EMBL" id="AY446894">
    <property type="protein sequence ID" value="AAR31629.1"/>
    <property type="molecule type" value="Genomic_DNA"/>
</dbReference>
<dbReference type="RefSeq" id="YP_081525.1">
    <property type="nucleotide sequence ID" value="NC_006273.2"/>
</dbReference>
<dbReference type="SMR" id="Q6SW65"/>
<dbReference type="BioGRID" id="1678004">
    <property type="interactions" value="1"/>
</dbReference>
<dbReference type="GeneID" id="3077451"/>
<dbReference type="KEGG" id="vg:3077451"/>
<dbReference type="Reactome" id="R-HSA-9609690">
    <property type="pathway name" value="HCMV Early Events"/>
</dbReference>
<dbReference type="Reactome" id="R-HSA-9610379">
    <property type="pathway name" value="HCMV Late Events"/>
</dbReference>
<dbReference type="Proteomes" id="UP000000938">
    <property type="component" value="Segment"/>
</dbReference>
<dbReference type="GO" id="GO:0043657">
    <property type="term" value="C:host cell"/>
    <property type="evidence" value="ECO:0007669"/>
    <property type="project" value="GOC"/>
</dbReference>
<dbReference type="GO" id="GO:0042025">
    <property type="term" value="C:host cell nucleus"/>
    <property type="evidence" value="ECO:0007669"/>
    <property type="project" value="UniProtKB-SubCell"/>
</dbReference>
<dbReference type="GO" id="GO:0019028">
    <property type="term" value="C:viral capsid"/>
    <property type="evidence" value="ECO:0007669"/>
    <property type="project" value="UniProtKB-KW"/>
</dbReference>
<dbReference type="GO" id="GO:0019033">
    <property type="term" value="C:viral tegument"/>
    <property type="evidence" value="ECO:0000304"/>
    <property type="project" value="Reactome"/>
</dbReference>
<dbReference type="GO" id="GO:0046718">
    <property type="term" value="P:symbiont entry into host cell"/>
    <property type="evidence" value="ECO:0007669"/>
    <property type="project" value="UniProtKB-KW"/>
</dbReference>
<dbReference type="GO" id="GO:0019072">
    <property type="term" value="P:viral genome packaging"/>
    <property type="evidence" value="ECO:0007669"/>
    <property type="project" value="InterPro"/>
</dbReference>
<dbReference type="GO" id="GO:0075732">
    <property type="term" value="P:viral penetration into host nucleus"/>
    <property type="evidence" value="ECO:0007669"/>
    <property type="project" value="UniProtKB-KW"/>
</dbReference>
<dbReference type="HAMAP" id="MF_04025">
    <property type="entry name" value="HSV_CVC2"/>
    <property type="match status" value="1"/>
</dbReference>
<dbReference type="InterPro" id="IPR002493">
    <property type="entry name" value="Herpes_UL25"/>
</dbReference>
<dbReference type="Pfam" id="PF01499">
    <property type="entry name" value="Herpes_UL25"/>
    <property type="match status" value="1"/>
</dbReference>
<reference key="1">
    <citation type="journal article" date="2004" name="J. Gen. Virol.">
        <title>Genetic content of wild-type human cytomegalovirus.</title>
        <authorList>
            <person name="Dolan A."/>
            <person name="Cunningham C."/>
            <person name="Hector R.D."/>
            <person name="Hassan-Walker A.F."/>
            <person name="Lee L."/>
            <person name="Addison C."/>
            <person name="Dargan D.J."/>
            <person name="McGeoch D.J."/>
            <person name="Gatherer D."/>
            <person name="Emery V.C."/>
            <person name="Griffiths P.D."/>
            <person name="Sinzger C."/>
            <person name="McSharry B.P."/>
            <person name="Wilkinson G.W.G."/>
            <person name="Davison A.J."/>
        </authorList>
    </citation>
    <scope>NUCLEOTIDE SEQUENCE [LARGE SCALE GENOMIC DNA]</scope>
</reference>
<feature type="chain" id="PRO_0000418317" description="Capsid vertex component 2">
    <location>
        <begin position="1"/>
        <end position="636"/>
    </location>
</feature>
<feature type="region of interest" description="Interaction with major capsid protein/MCP" evidence="1">
    <location>
        <begin position="1"/>
        <end position="48"/>
    </location>
</feature>
<feature type="region of interest" description="Disordered" evidence="2">
    <location>
        <begin position="97"/>
        <end position="125"/>
    </location>
</feature>
<organismHost>
    <name type="scientific">Homo sapiens</name>
    <name type="common">Human</name>
    <dbReference type="NCBI Taxonomy" id="9606"/>
</organismHost>
<comment type="function">
    <text evidence="1">Capsid vertex-specific component that plays a role during viral DNA encapsidation, assuring correct genome cleavage and presumably stabilizing capsids that contain full-length viral genomes. Participates in the interaction between the capsid and the tegument through interaction with the large tegument protein/LTP.</text>
</comment>
<comment type="subunit">
    <text evidence="1">Heterodimerizes with CVC1. Interacts with major capsid protein/MCP and triplex capsid protein 1/TRX1 at the pentamer vertices. Interacts with the large tegument protein/LTP.</text>
</comment>
<comment type="subcellular location">
    <subcellularLocation>
        <location evidence="1">Virion</location>
    </subcellularLocation>
    <subcellularLocation>
        <location evidence="1">Host nucleus</location>
    </subcellularLocation>
</comment>
<comment type="similarity">
    <text evidence="1">Belongs to the herpesviridae CVC2 protein family.</text>
</comment>
<sequence>MSLLHTFWRLPVAVFFEPHEENVLRCPERVLRRLLEDAAVAMRGGGWREDVLMDRVRKRYLRQELRDLGHRVQTYCEDLEGRVSEAEALLNQQCELDEGPSPRTLLQPPCRPRSSSPGTGVAGASAVPHGLYSRHDAITGPVAAPSDAVAASAAAGASSTWLAQCAEQPLPGNVPNYFGITQNDPFIRFHTDFRGEVVNTMFENASTWTFSFGIWYYRLKRGLYTQPRWKRVYHLAQMDNFSISQELLLGVVNALENVTVYPTYDCVLSDLEAAACLLVAYGHALWEGRDPPDSVTAVLSELPQLLPRLADDVSREIAAWEGPVAAGNNYYAYRDSPDLRYYMPLSGGRHYHPGTFDRHVLVRLFHKRGVLQHLPGYGTITEELVQERLSGQVRDDVLSLWSRRLLVGKLGRDVPVFVHEQQYLRSGLTCLAGLLLLWKVTNADSVFAPRTGKFTLADLLGSDAVAGGGLPGGRAGGEEKGYGGRHGRVRNFEFLVQYYIGPWYARDPAVTLSQLFPGLALLAVTESVRSGWDPSRREDSAGGGDGGGAVLMQLSKSNPVADYMFAQSSKQYGDLRRLEVHDALLFHYEHGLGRLLSVTLPRHRVSTLGSSLFNVNDIYELLYFLVLGFLPSVAVL</sequence>
<organism>
    <name type="scientific">Human cytomegalovirus (strain Merlin)</name>
    <name type="common">HHV-5</name>
    <name type="synonym">Human herpesvirus 5</name>
    <dbReference type="NCBI Taxonomy" id="295027"/>
    <lineage>
        <taxon>Viruses</taxon>
        <taxon>Duplodnaviria</taxon>
        <taxon>Heunggongvirae</taxon>
        <taxon>Peploviricota</taxon>
        <taxon>Herviviricetes</taxon>
        <taxon>Herpesvirales</taxon>
        <taxon>Orthoherpesviridae</taxon>
        <taxon>Betaherpesvirinae</taxon>
        <taxon>Cytomegalovirus</taxon>
        <taxon>Cytomegalovirus humanbeta5</taxon>
        <taxon>Human cytomegalovirus</taxon>
    </lineage>
</organism>
<evidence type="ECO:0000255" key="1">
    <source>
        <dbReference type="HAMAP-Rule" id="MF_04025"/>
    </source>
</evidence>
<evidence type="ECO:0000256" key="2">
    <source>
        <dbReference type="SAM" id="MobiDB-lite"/>
    </source>
</evidence>
<name>CVC2_HCMVM</name>
<accession>Q6SW65</accession>
<accession>D2K3N5</accession>
<proteinExistence type="inferred from homology"/>